<dbReference type="EMBL" id="AACD01000112">
    <property type="protein sequence ID" value="EAA58512.1"/>
    <property type="status" value="ALT_SEQ"/>
    <property type="molecule type" value="Genomic_DNA"/>
</dbReference>
<dbReference type="EMBL" id="BN001301">
    <property type="status" value="NOT_ANNOTATED_CDS"/>
    <property type="molecule type" value="Genomic_DNA"/>
</dbReference>
<dbReference type="RefSeq" id="XP_664298.1">
    <property type="nucleotide sequence ID" value="XM_659206.1"/>
</dbReference>
<dbReference type="SMR" id="P0C1D2"/>
<dbReference type="STRING" id="227321.P0C1D2"/>
<dbReference type="VEuPathDB" id="FungiDB:AN11898"/>
<dbReference type="HOGENOM" id="CLU_004894_0_0_1"/>
<dbReference type="InParanoid" id="P0C1D2"/>
<dbReference type="Proteomes" id="UP000000560">
    <property type="component" value="Chromosome I"/>
</dbReference>
<dbReference type="GO" id="GO:0005743">
    <property type="term" value="C:mitochondrial inner membrane"/>
    <property type="evidence" value="ECO:0007669"/>
    <property type="project" value="UniProtKB-SubCell"/>
</dbReference>
<dbReference type="GO" id="GO:0005758">
    <property type="term" value="C:mitochondrial intermembrane space"/>
    <property type="evidence" value="ECO:0000318"/>
    <property type="project" value="GO_Central"/>
</dbReference>
<dbReference type="GO" id="GO:0015035">
    <property type="term" value="F:protein-disulfide reductase activity"/>
    <property type="evidence" value="ECO:0000318"/>
    <property type="project" value="GO_Central"/>
</dbReference>
<dbReference type="GO" id="GO:0045041">
    <property type="term" value="P:protein import into mitochondrial intermembrane space"/>
    <property type="evidence" value="ECO:0000318"/>
    <property type="project" value="GO_Central"/>
</dbReference>
<dbReference type="FunFam" id="1.10.287.2900:FF:000002">
    <property type="entry name" value="Mitochondrial intermembrane space import and assembly protein"/>
    <property type="match status" value="1"/>
</dbReference>
<dbReference type="Gene3D" id="1.10.287.2900">
    <property type="match status" value="1"/>
</dbReference>
<dbReference type="InterPro" id="IPR010625">
    <property type="entry name" value="CHCH"/>
</dbReference>
<dbReference type="InterPro" id="IPR039289">
    <property type="entry name" value="CHCHD4"/>
</dbReference>
<dbReference type="PANTHER" id="PTHR21622">
    <property type="entry name" value="COILED-COIL-HELIX-COILED-COIL-HELIX DOMAIN CONTAINING 4"/>
    <property type="match status" value="1"/>
</dbReference>
<dbReference type="PANTHER" id="PTHR21622:SF0">
    <property type="entry name" value="COILED-COIL-HELIX-COILED-COIL-HELIX DOMAIN CONTAINING 4"/>
    <property type="match status" value="1"/>
</dbReference>
<dbReference type="Pfam" id="PF06747">
    <property type="entry name" value="CHCH"/>
    <property type="match status" value="1"/>
</dbReference>
<dbReference type="PROSITE" id="PS51808">
    <property type="entry name" value="CHCH"/>
    <property type="match status" value="1"/>
</dbReference>
<comment type="function">
    <text evidence="1">Required for the import and folding of small cysteine-containing proteins (small Tim) in the mitochondrial intermembrane space (IMS). Forms a redox cycle with ERV1 that involves a disulfide relay system. Precursor proteins to be imported into the IMS are translocated in their reduced form into the mitochondria. The oxidized form of MIA40 forms a transient intermolecular disulfide bridge with the reduced precursor protein, resulting in oxidation of the precursor protein that now contains an intramolecular disulfide bond and is able to undergo folding in the IMS (By similarity).</text>
</comment>
<comment type="cofactor">
    <cofactor evidence="1">
        <name>Cu(2+)</name>
        <dbReference type="ChEBI" id="CHEBI:29036"/>
    </cofactor>
    <cofactor evidence="1">
        <name>Zn(2+)</name>
        <dbReference type="ChEBI" id="CHEBI:29105"/>
    </cofactor>
    <text evidence="1">Cu(2+) or Zn(2+).</text>
</comment>
<comment type="subunit">
    <text evidence="1">Monomer.</text>
</comment>
<comment type="subcellular location">
    <subcellularLocation>
        <location evidence="1">Mitochondrion inner membrane</location>
        <topology evidence="1">Single-pass type II membrane protein</topology>
        <orientation evidence="1">Intermembrane side</orientation>
    </subcellularLocation>
</comment>
<comment type="domain">
    <text evidence="1">The CHCH domain contains a conserved twin Cys-X(9)-Cys motif which is required for import and stability of MIA40 in mitochondria.</text>
</comment>
<comment type="sequence caution" evidence="5">
    <conflict type="erroneous gene model prediction">
        <sequence resource="EMBL-CDS" id="EAA58512"/>
    </conflict>
    <text>The predicted gene AN6694 has been split into 2 genes: AN6694 and AN11898.</text>
</comment>
<name>MIA40_EMENI</name>
<sequence>MFRPASRALLRAPTPAVGVARGPTRRFISSSTGSTKPRSWKNTFIRVGLASGAVYYYNTSSVFAETPSLSFRPEAQPKHEDGKSLPTLDSIKPKSREEKKAPAAAADAAATPASTGANAQSESPLKSAEELEAEADQQAAFNPETGEINWDCPCLGGMAYGPCGEEFRAAFSCFVYSEEEPKGMDCIDKFKAMQDCFRAHPDVYGAELDDDEEAGAEANAAGVEQPLAAEVDASVPVEKHEQAKEVRDEVKSAAGEVAESEEVVPKALDVSEQEKTPEQQTEK</sequence>
<organism>
    <name type="scientific">Emericella nidulans (strain FGSC A4 / ATCC 38163 / CBS 112.46 / NRRL 194 / M139)</name>
    <name type="common">Aspergillus nidulans</name>
    <dbReference type="NCBI Taxonomy" id="227321"/>
    <lineage>
        <taxon>Eukaryota</taxon>
        <taxon>Fungi</taxon>
        <taxon>Dikarya</taxon>
        <taxon>Ascomycota</taxon>
        <taxon>Pezizomycotina</taxon>
        <taxon>Eurotiomycetes</taxon>
        <taxon>Eurotiomycetidae</taxon>
        <taxon>Eurotiales</taxon>
        <taxon>Aspergillaceae</taxon>
        <taxon>Aspergillus</taxon>
        <taxon>Aspergillus subgen. Nidulantes</taxon>
    </lineage>
</organism>
<evidence type="ECO:0000250" key="1"/>
<evidence type="ECO:0000255" key="2"/>
<evidence type="ECO:0000255" key="3">
    <source>
        <dbReference type="PROSITE-ProRule" id="PRU01150"/>
    </source>
</evidence>
<evidence type="ECO:0000256" key="4">
    <source>
        <dbReference type="SAM" id="MobiDB-lite"/>
    </source>
</evidence>
<evidence type="ECO:0000305" key="5"/>
<proteinExistence type="inferred from homology"/>
<gene>
    <name type="primary">mia40</name>
    <name type="synonym">tim40</name>
    <name type="ORF">AN11898</name>
</gene>
<reference key="1">
    <citation type="journal article" date="2005" name="Nature">
        <title>Sequencing of Aspergillus nidulans and comparative analysis with A. fumigatus and A. oryzae.</title>
        <authorList>
            <person name="Galagan J.E."/>
            <person name="Calvo S.E."/>
            <person name="Cuomo C."/>
            <person name="Ma L.-J."/>
            <person name="Wortman J.R."/>
            <person name="Batzoglou S."/>
            <person name="Lee S.-I."/>
            <person name="Bastuerkmen M."/>
            <person name="Spevak C.C."/>
            <person name="Clutterbuck J."/>
            <person name="Kapitonov V."/>
            <person name="Jurka J."/>
            <person name="Scazzocchio C."/>
            <person name="Farman M.L."/>
            <person name="Butler J."/>
            <person name="Purcell S."/>
            <person name="Harris S."/>
            <person name="Braus G.H."/>
            <person name="Draht O."/>
            <person name="Busch S."/>
            <person name="D'Enfert C."/>
            <person name="Bouchier C."/>
            <person name="Goldman G.H."/>
            <person name="Bell-Pedersen D."/>
            <person name="Griffiths-Jones S."/>
            <person name="Doonan J.H."/>
            <person name="Yu J."/>
            <person name="Vienken K."/>
            <person name="Pain A."/>
            <person name="Freitag M."/>
            <person name="Selker E.U."/>
            <person name="Archer D.B."/>
            <person name="Penalva M.A."/>
            <person name="Oakley B.R."/>
            <person name="Momany M."/>
            <person name="Tanaka T."/>
            <person name="Kumagai T."/>
            <person name="Asai K."/>
            <person name="Machida M."/>
            <person name="Nierman W.C."/>
            <person name="Denning D.W."/>
            <person name="Caddick M.X."/>
            <person name="Hynes M."/>
            <person name="Paoletti M."/>
            <person name="Fischer R."/>
            <person name="Miller B.L."/>
            <person name="Dyer P.S."/>
            <person name="Sachs M.S."/>
            <person name="Osmani S.A."/>
            <person name="Birren B.W."/>
        </authorList>
    </citation>
    <scope>NUCLEOTIDE SEQUENCE [LARGE SCALE GENOMIC DNA]</scope>
    <source>
        <strain>FGSC A4 / ATCC 38163 / CBS 112.46 / NRRL 194 / M139</strain>
    </source>
</reference>
<reference key="2">
    <citation type="journal article" date="2009" name="Fungal Genet. Biol.">
        <title>The 2008 update of the Aspergillus nidulans genome annotation: a community effort.</title>
        <authorList>
            <person name="Wortman J.R."/>
            <person name="Gilsenan J.M."/>
            <person name="Joardar V."/>
            <person name="Deegan J."/>
            <person name="Clutterbuck J."/>
            <person name="Andersen M.R."/>
            <person name="Archer D."/>
            <person name="Bencina M."/>
            <person name="Braus G."/>
            <person name="Coutinho P."/>
            <person name="von Dohren H."/>
            <person name="Doonan J."/>
            <person name="Driessen A.J."/>
            <person name="Durek P."/>
            <person name="Espeso E."/>
            <person name="Fekete E."/>
            <person name="Flipphi M."/>
            <person name="Estrada C.G."/>
            <person name="Geysens S."/>
            <person name="Goldman G."/>
            <person name="de Groot P.W."/>
            <person name="Hansen K."/>
            <person name="Harris S.D."/>
            <person name="Heinekamp T."/>
            <person name="Helmstaedt K."/>
            <person name="Henrissat B."/>
            <person name="Hofmann G."/>
            <person name="Homan T."/>
            <person name="Horio T."/>
            <person name="Horiuchi H."/>
            <person name="James S."/>
            <person name="Jones M."/>
            <person name="Karaffa L."/>
            <person name="Karanyi Z."/>
            <person name="Kato M."/>
            <person name="Keller N."/>
            <person name="Kelly D.E."/>
            <person name="Kiel J.A."/>
            <person name="Kim J.M."/>
            <person name="van der Klei I.J."/>
            <person name="Klis F.M."/>
            <person name="Kovalchuk A."/>
            <person name="Krasevec N."/>
            <person name="Kubicek C.P."/>
            <person name="Liu B."/>
            <person name="Maccabe A."/>
            <person name="Meyer V."/>
            <person name="Mirabito P."/>
            <person name="Miskei M."/>
            <person name="Mos M."/>
            <person name="Mullins J."/>
            <person name="Nelson D.R."/>
            <person name="Nielsen J."/>
            <person name="Oakley B.R."/>
            <person name="Osmani S.A."/>
            <person name="Pakula T."/>
            <person name="Paszewski A."/>
            <person name="Paulsen I."/>
            <person name="Pilsyk S."/>
            <person name="Pocsi I."/>
            <person name="Punt P.J."/>
            <person name="Ram A.F."/>
            <person name="Ren Q."/>
            <person name="Robellet X."/>
            <person name="Robson G."/>
            <person name="Seiboth B."/>
            <person name="van Solingen P."/>
            <person name="Specht T."/>
            <person name="Sun J."/>
            <person name="Taheri-Talesh N."/>
            <person name="Takeshita N."/>
            <person name="Ussery D."/>
            <person name="vanKuyk P.A."/>
            <person name="Visser H."/>
            <person name="van de Vondervoort P.J."/>
            <person name="de Vries R.P."/>
            <person name="Walton J."/>
            <person name="Xiang X."/>
            <person name="Xiong Y."/>
            <person name="Zeng A.P."/>
            <person name="Brandt B.W."/>
            <person name="Cornell M.J."/>
            <person name="van den Hondel C.A."/>
            <person name="Visser J."/>
            <person name="Oliver S.G."/>
            <person name="Turner G."/>
        </authorList>
    </citation>
    <scope>GENOME REANNOTATION</scope>
    <source>
        <strain>FGSC A4 / ATCC 38163 / CBS 112.46 / NRRL 194 / M139</strain>
    </source>
</reference>
<feature type="transit peptide" description="Mitochondrion" evidence="2">
    <location>
        <begin position="1"/>
        <end position="35"/>
    </location>
</feature>
<feature type="chain" id="PRO_0000235289" description="Mitochondrial intermembrane space import and assembly protein 40">
    <location>
        <begin position="36"/>
        <end position="283"/>
    </location>
</feature>
<feature type="topological domain" description="Mitochondrial matrix" evidence="2">
    <location>
        <begin position="36"/>
        <end position="46"/>
    </location>
</feature>
<feature type="transmembrane region" description="Helical; Signal-anchor for type II membrane protein" evidence="2">
    <location>
        <begin position="47"/>
        <end position="64"/>
    </location>
</feature>
<feature type="topological domain" description="Mitochondrial intermembrane" evidence="2">
    <location>
        <begin position="65"/>
        <end position="283"/>
    </location>
</feature>
<feature type="domain" description="CHCH" evidence="3">
    <location>
        <begin position="160"/>
        <end position="204"/>
    </location>
</feature>
<feature type="region of interest" description="Disordered" evidence="4">
    <location>
        <begin position="72"/>
        <end position="136"/>
    </location>
</feature>
<feature type="region of interest" description="Disordered" evidence="4">
    <location>
        <begin position="211"/>
        <end position="283"/>
    </location>
</feature>
<feature type="short sequence motif" description="Cx9C motif 1" evidence="3">
    <location>
        <begin position="163"/>
        <end position="173"/>
    </location>
</feature>
<feature type="short sequence motif" description="Cx9C motif 2" evidence="3">
    <location>
        <begin position="186"/>
        <end position="196"/>
    </location>
</feature>
<feature type="compositionally biased region" description="Basic and acidic residues" evidence="4">
    <location>
        <begin position="91"/>
        <end position="101"/>
    </location>
</feature>
<feature type="compositionally biased region" description="Low complexity" evidence="4">
    <location>
        <begin position="102"/>
        <end position="119"/>
    </location>
</feature>
<feature type="compositionally biased region" description="Basic and acidic residues" evidence="4">
    <location>
        <begin position="237"/>
        <end position="251"/>
    </location>
</feature>
<feature type="compositionally biased region" description="Basic and acidic residues" evidence="4">
    <location>
        <begin position="272"/>
        <end position="283"/>
    </location>
</feature>
<feature type="disulfide bond" description="Redox-active" evidence="1">
    <location>
        <begin position="152"/>
        <end position="154"/>
    </location>
</feature>
<feature type="disulfide bond" evidence="3">
    <location>
        <begin position="163"/>
        <end position="196"/>
    </location>
</feature>
<feature type="disulfide bond" evidence="3">
    <location>
        <begin position="173"/>
        <end position="186"/>
    </location>
</feature>
<keyword id="KW-1015">Disulfide bond</keyword>
<keyword id="KW-0472">Membrane</keyword>
<keyword id="KW-0496">Mitochondrion</keyword>
<keyword id="KW-0999">Mitochondrion inner membrane</keyword>
<keyword id="KW-0560">Oxidoreductase</keyword>
<keyword id="KW-0653">Protein transport</keyword>
<keyword id="KW-0676">Redox-active center</keyword>
<keyword id="KW-1185">Reference proteome</keyword>
<keyword id="KW-0735">Signal-anchor</keyword>
<keyword id="KW-0809">Transit peptide</keyword>
<keyword id="KW-0811">Translocation</keyword>
<keyword id="KW-0812">Transmembrane</keyword>
<keyword id="KW-1133">Transmembrane helix</keyword>
<keyword id="KW-0813">Transport</keyword>
<protein>
    <recommendedName>
        <fullName>Mitochondrial intermembrane space import and assembly protein 40</fullName>
    </recommendedName>
    <alternativeName>
        <fullName>Mitochondrial import inner membrane translocase TIM40</fullName>
    </alternativeName>
</protein>
<accession>P0C1D2</accession>
<accession>Q5AYD6</accession>